<sequence>MVRSVWKGPFVEGSLLKKADVARASGRHDVIKIWSRRSTILPQFVGLTFGVYNGQKHVPVAINEEMVGHKFGEFSPTRTFHGHSGDKKSKKG</sequence>
<dbReference type="EMBL" id="CP000283">
    <property type="protein sequence ID" value="ABE40406.1"/>
    <property type="molecule type" value="Genomic_DNA"/>
</dbReference>
<dbReference type="SMR" id="Q134T3"/>
<dbReference type="STRING" id="316057.RPD_3180"/>
<dbReference type="KEGG" id="rpd:RPD_3180"/>
<dbReference type="eggNOG" id="COG0185">
    <property type="taxonomic scope" value="Bacteria"/>
</dbReference>
<dbReference type="HOGENOM" id="CLU_144911_0_1_5"/>
<dbReference type="BioCyc" id="RPAL316057:RPD_RS15965-MONOMER"/>
<dbReference type="Proteomes" id="UP000001818">
    <property type="component" value="Chromosome"/>
</dbReference>
<dbReference type="GO" id="GO:0005737">
    <property type="term" value="C:cytoplasm"/>
    <property type="evidence" value="ECO:0007669"/>
    <property type="project" value="UniProtKB-ARBA"/>
</dbReference>
<dbReference type="GO" id="GO:0015935">
    <property type="term" value="C:small ribosomal subunit"/>
    <property type="evidence" value="ECO:0007669"/>
    <property type="project" value="InterPro"/>
</dbReference>
<dbReference type="GO" id="GO:0019843">
    <property type="term" value="F:rRNA binding"/>
    <property type="evidence" value="ECO:0007669"/>
    <property type="project" value="UniProtKB-UniRule"/>
</dbReference>
<dbReference type="GO" id="GO:0003735">
    <property type="term" value="F:structural constituent of ribosome"/>
    <property type="evidence" value="ECO:0007669"/>
    <property type="project" value="InterPro"/>
</dbReference>
<dbReference type="GO" id="GO:0000028">
    <property type="term" value="P:ribosomal small subunit assembly"/>
    <property type="evidence" value="ECO:0007669"/>
    <property type="project" value="TreeGrafter"/>
</dbReference>
<dbReference type="GO" id="GO:0006412">
    <property type="term" value="P:translation"/>
    <property type="evidence" value="ECO:0007669"/>
    <property type="project" value="UniProtKB-UniRule"/>
</dbReference>
<dbReference type="FunFam" id="3.30.860.10:FF:000001">
    <property type="entry name" value="30S ribosomal protein S19"/>
    <property type="match status" value="1"/>
</dbReference>
<dbReference type="Gene3D" id="3.30.860.10">
    <property type="entry name" value="30s Ribosomal Protein S19, Chain A"/>
    <property type="match status" value="1"/>
</dbReference>
<dbReference type="HAMAP" id="MF_00531">
    <property type="entry name" value="Ribosomal_uS19"/>
    <property type="match status" value="1"/>
</dbReference>
<dbReference type="InterPro" id="IPR002222">
    <property type="entry name" value="Ribosomal_uS19"/>
</dbReference>
<dbReference type="InterPro" id="IPR005732">
    <property type="entry name" value="Ribosomal_uS19_bac-type"/>
</dbReference>
<dbReference type="InterPro" id="IPR020934">
    <property type="entry name" value="Ribosomal_uS19_CS"/>
</dbReference>
<dbReference type="InterPro" id="IPR023575">
    <property type="entry name" value="Ribosomal_uS19_SF"/>
</dbReference>
<dbReference type="NCBIfam" id="TIGR01050">
    <property type="entry name" value="rpsS_bact"/>
    <property type="match status" value="1"/>
</dbReference>
<dbReference type="PANTHER" id="PTHR11880">
    <property type="entry name" value="RIBOSOMAL PROTEIN S19P FAMILY MEMBER"/>
    <property type="match status" value="1"/>
</dbReference>
<dbReference type="PANTHER" id="PTHR11880:SF8">
    <property type="entry name" value="SMALL RIBOSOMAL SUBUNIT PROTEIN US19M"/>
    <property type="match status" value="1"/>
</dbReference>
<dbReference type="Pfam" id="PF00203">
    <property type="entry name" value="Ribosomal_S19"/>
    <property type="match status" value="1"/>
</dbReference>
<dbReference type="PIRSF" id="PIRSF002144">
    <property type="entry name" value="Ribosomal_S19"/>
    <property type="match status" value="1"/>
</dbReference>
<dbReference type="PRINTS" id="PR00975">
    <property type="entry name" value="RIBOSOMALS19"/>
</dbReference>
<dbReference type="SUPFAM" id="SSF54570">
    <property type="entry name" value="Ribosomal protein S19"/>
    <property type="match status" value="1"/>
</dbReference>
<dbReference type="PROSITE" id="PS00323">
    <property type="entry name" value="RIBOSOMAL_S19"/>
    <property type="match status" value="1"/>
</dbReference>
<accession>Q134T3</accession>
<feature type="chain" id="PRO_0000265416" description="Small ribosomal subunit protein uS19">
    <location>
        <begin position="1"/>
        <end position="92"/>
    </location>
</feature>
<evidence type="ECO:0000255" key="1">
    <source>
        <dbReference type="HAMAP-Rule" id="MF_00531"/>
    </source>
</evidence>
<evidence type="ECO:0000305" key="2"/>
<name>RS19_RHOPS</name>
<keyword id="KW-0687">Ribonucleoprotein</keyword>
<keyword id="KW-0689">Ribosomal protein</keyword>
<keyword id="KW-0694">RNA-binding</keyword>
<keyword id="KW-0699">rRNA-binding</keyword>
<proteinExistence type="inferred from homology"/>
<comment type="function">
    <text evidence="1">Protein S19 forms a complex with S13 that binds strongly to the 16S ribosomal RNA.</text>
</comment>
<comment type="similarity">
    <text evidence="1">Belongs to the universal ribosomal protein uS19 family.</text>
</comment>
<gene>
    <name evidence="1" type="primary">rpsS</name>
    <name type="ordered locus">RPD_3180</name>
</gene>
<reference key="1">
    <citation type="submission" date="2006-03" db="EMBL/GenBank/DDBJ databases">
        <title>Complete sequence of Rhodopseudomonas palustris BisB5.</title>
        <authorList>
            <consortium name="US DOE Joint Genome Institute"/>
            <person name="Copeland A."/>
            <person name="Lucas S."/>
            <person name="Lapidus A."/>
            <person name="Barry K."/>
            <person name="Detter J.C."/>
            <person name="Glavina del Rio T."/>
            <person name="Hammon N."/>
            <person name="Israni S."/>
            <person name="Dalin E."/>
            <person name="Tice H."/>
            <person name="Pitluck S."/>
            <person name="Chain P."/>
            <person name="Malfatti S."/>
            <person name="Shin M."/>
            <person name="Vergez L."/>
            <person name="Schmutz J."/>
            <person name="Larimer F."/>
            <person name="Land M."/>
            <person name="Hauser L."/>
            <person name="Pelletier D.A."/>
            <person name="Kyrpides N."/>
            <person name="Lykidis A."/>
            <person name="Oda Y."/>
            <person name="Harwood C.S."/>
            <person name="Richardson P."/>
        </authorList>
    </citation>
    <scope>NUCLEOTIDE SEQUENCE [LARGE SCALE GENOMIC DNA]</scope>
    <source>
        <strain>BisB5</strain>
    </source>
</reference>
<organism>
    <name type="scientific">Rhodopseudomonas palustris (strain BisB5)</name>
    <dbReference type="NCBI Taxonomy" id="316057"/>
    <lineage>
        <taxon>Bacteria</taxon>
        <taxon>Pseudomonadati</taxon>
        <taxon>Pseudomonadota</taxon>
        <taxon>Alphaproteobacteria</taxon>
        <taxon>Hyphomicrobiales</taxon>
        <taxon>Nitrobacteraceae</taxon>
        <taxon>Rhodopseudomonas</taxon>
    </lineage>
</organism>
<protein>
    <recommendedName>
        <fullName evidence="1">Small ribosomal subunit protein uS19</fullName>
    </recommendedName>
    <alternativeName>
        <fullName evidence="2">30S ribosomal protein S19</fullName>
    </alternativeName>
</protein>